<dbReference type="EMBL" id="AY033496">
    <property type="protein sequence ID" value="AAK55109.1"/>
    <property type="molecule type" value="Genomic_DNA"/>
</dbReference>
<dbReference type="EMBL" id="AY033495">
    <property type="protein sequence ID" value="AAK55108.1"/>
    <property type="molecule type" value="mRNA"/>
</dbReference>
<dbReference type="EMBL" id="AK093060">
    <property type="protein sequence ID" value="BAC04039.1"/>
    <property type="status" value="ALT_INIT"/>
    <property type="molecule type" value="mRNA"/>
</dbReference>
<dbReference type="EMBL" id="AK293645">
    <property type="protein sequence ID" value="BAG57099.1"/>
    <property type="molecule type" value="mRNA"/>
</dbReference>
<dbReference type="EMBL" id="AC055715">
    <property type="status" value="NOT_ANNOTATED_CDS"/>
    <property type="molecule type" value="Genomic_DNA"/>
</dbReference>
<dbReference type="EMBL" id="BC113686">
    <property type="protein sequence ID" value="AAI13687.1"/>
    <property type="molecule type" value="mRNA"/>
</dbReference>
<dbReference type="CCDS" id="CCDS53795.1">
    <molecule id="Q14CN4-3"/>
</dbReference>
<dbReference type="CCDS" id="CCDS8833.1">
    <molecule id="Q14CN4-1"/>
</dbReference>
<dbReference type="RefSeq" id="NP_001139697.1">
    <molecule id="Q14CN4-1"/>
    <property type="nucleotide sequence ID" value="NM_001146225.2"/>
</dbReference>
<dbReference type="RefSeq" id="NP_001139698.1">
    <molecule id="Q14CN4-3"/>
    <property type="nucleotide sequence ID" value="NM_001146226.2"/>
</dbReference>
<dbReference type="RefSeq" id="NP_542785.1">
    <molecule id="Q14CN4-1"/>
    <property type="nucleotide sequence ID" value="NM_080747.3"/>
</dbReference>
<dbReference type="SMR" id="Q14CN4"/>
<dbReference type="BioGRID" id="126715">
    <property type="interactions" value="71"/>
</dbReference>
<dbReference type="FunCoup" id="Q14CN4">
    <property type="interactions" value="96"/>
</dbReference>
<dbReference type="IntAct" id="Q14CN4">
    <property type="interactions" value="29"/>
</dbReference>
<dbReference type="STRING" id="9606.ENSP00000293745"/>
<dbReference type="GlyGen" id="Q14CN4">
    <property type="glycosylation" value="1 site, 1 O-linked glycan (1 site)"/>
</dbReference>
<dbReference type="iPTMnet" id="Q14CN4"/>
<dbReference type="PhosphoSitePlus" id="Q14CN4"/>
<dbReference type="SwissPalm" id="Q14CN4"/>
<dbReference type="BioMuta" id="KRT72"/>
<dbReference type="DMDM" id="166218813"/>
<dbReference type="jPOST" id="Q14CN4"/>
<dbReference type="MassIVE" id="Q14CN4"/>
<dbReference type="PaxDb" id="9606-ENSP00000293745"/>
<dbReference type="PeptideAtlas" id="Q14CN4"/>
<dbReference type="PRIDE" id="Q14CN4"/>
<dbReference type="ProteomicsDB" id="46210"/>
<dbReference type="ProteomicsDB" id="60329">
    <molecule id="Q14CN4-1"/>
</dbReference>
<dbReference type="ProteomicsDB" id="60330">
    <molecule id="Q14CN4-2"/>
</dbReference>
<dbReference type="Antibodypedia" id="55991">
    <property type="antibodies" value="115 antibodies from 20 providers"/>
</dbReference>
<dbReference type="DNASU" id="140807"/>
<dbReference type="Ensembl" id="ENST00000293745.7">
    <molecule id="Q14CN4-1"/>
    <property type="protein sequence ID" value="ENSP00000293745.2"/>
    <property type="gene ID" value="ENSG00000170486.11"/>
</dbReference>
<dbReference type="Ensembl" id="ENST00000354310.4">
    <molecule id="Q14CN4-3"/>
    <property type="protein sequence ID" value="ENSP00000346269.4"/>
    <property type="gene ID" value="ENSG00000170486.11"/>
</dbReference>
<dbReference type="Ensembl" id="ENST00000537672.6">
    <molecule id="Q14CN4-1"/>
    <property type="protein sequence ID" value="ENSP00000441160.2"/>
    <property type="gene ID" value="ENSG00000170486.11"/>
</dbReference>
<dbReference type="GeneID" id="140807"/>
<dbReference type="KEGG" id="hsa:140807"/>
<dbReference type="MANE-Select" id="ENST00000293745.7">
    <property type="protein sequence ID" value="ENSP00000293745.2"/>
    <property type="RefSeq nucleotide sequence ID" value="NM_080747.3"/>
    <property type="RefSeq protein sequence ID" value="NP_542785.1"/>
</dbReference>
<dbReference type="UCSC" id="uc001saq.2">
    <molecule id="Q14CN4-1"/>
    <property type="organism name" value="human"/>
</dbReference>
<dbReference type="AGR" id="HGNC:28932"/>
<dbReference type="CTD" id="140807"/>
<dbReference type="DisGeNET" id="140807"/>
<dbReference type="GeneCards" id="KRT72"/>
<dbReference type="HGNC" id="HGNC:28932">
    <property type="gene designation" value="KRT72"/>
</dbReference>
<dbReference type="HPA" id="ENSG00000170486">
    <property type="expression patterns" value="Group enriched (skin, testis)"/>
</dbReference>
<dbReference type="MIM" id="608246">
    <property type="type" value="gene"/>
</dbReference>
<dbReference type="neXtProt" id="NX_Q14CN4"/>
<dbReference type="OpenTargets" id="ENSG00000170486"/>
<dbReference type="PharmGKB" id="PA147357719"/>
<dbReference type="VEuPathDB" id="HostDB:ENSG00000170486"/>
<dbReference type="eggNOG" id="ENOG502T3SC">
    <property type="taxonomic scope" value="Eukaryota"/>
</dbReference>
<dbReference type="GeneTree" id="ENSGT00940000162105"/>
<dbReference type="HOGENOM" id="CLU_012560_6_1_1"/>
<dbReference type="InParanoid" id="Q14CN4"/>
<dbReference type="OMA" id="CKKRYEV"/>
<dbReference type="OrthoDB" id="2441647at2759"/>
<dbReference type="PAN-GO" id="Q14CN4">
    <property type="GO annotations" value="4 GO annotations based on evolutionary models"/>
</dbReference>
<dbReference type="PhylomeDB" id="Q14CN4"/>
<dbReference type="TreeFam" id="TF317854"/>
<dbReference type="PathwayCommons" id="Q14CN4"/>
<dbReference type="Reactome" id="R-HSA-6805567">
    <property type="pathway name" value="Keratinization"/>
</dbReference>
<dbReference type="Reactome" id="R-HSA-6809371">
    <property type="pathway name" value="Formation of the cornified envelope"/>
</dbReference>
<dbReference type="SignaLink" id="Q14CN4"/>
<dbReference type="BioGRID-ORCS" id="140807">
    <property type="hits" value="13 hits in 1145 CRISPR screens"/>
</dbReference>
<dbReference type="GenomeRNAi" id="140807"/>
<dbReference type="Pharos" id="Q14CN4">
    <property type="development level" value="Tbio"/>
</dbReference>
<dbReference type="PRO" id="PR:Q14CN4"/>
<dbReference type="Proteomes" id="UP000005640">
    <property type="component" value="Chromosome 12"/>
</dbReference>
<dbReference type="RNAct" id="Q14CN4">
    <property type="molecule type" value="protein"/>
</dbReference>
<dbReference type="Bgee" id="ENSG00000170486">
    <property type="expression patterns" value="Expressed in granulocyte and 76 other cell types or tissues"/>
</dbReference>
<dbReference type="ExpressionAtlas" id="Q14CN4">
    <property type="expression patterns" value="baseline and differential"/>
</dbReference>
<dbReference type="GO" id="GO:0005829">
    <property type="term" value="C:cytosol"/>
    <property type="evidence" value="ECO:0000304"/>
    <property type="project" value="Reactome"/>
</dbReference>
<dbReference type="GO" id="GO:0070062">
    <property type="term" value="C:extracellular exosome"/>
    <property type="evidence" value="ECO:0007005"/>
    <property type="project" value="UniProtKB"/>
</dbReference>
<dbReference type="GO" id="GO:0045095">
    <property type="term" value="C:keratin filament"/>
    <property type="evidence" value="ECO:0000318"/>
    <property type="project" value="GO_Central"/>
</dbReference>
<dbReference type="GO" id="GO:0030280">
    <property type="term" value="F:structural constituent of skin epidermis"/>
    <property type="evidence" value="ECO:0000318"/>
    <property type="project" value="GO_Central"/>
</dbReference>
<dbReference type="GO" id="GO:0045109">
    <property type="term" value="P:intermediate filament organization"/>
    <property type="evidence" value="ECO:0000318"/>
    <property type="project" value="GO_Central"/>
</dbReference>
<dbReference type="GO" id="GO:0031424">
    <property type="term" value="P:keratinization"/>
    <property type="evidence" value="ECO:0000318"/>
    <property type="project" value="GO_Central"/>
</dbReference>
<dbReference type="FunFam" id="1.20.5.1160:FF:000001">
    <property type="entry name" value="Keratin type II"/>
    <property type="match status" value="1"/>
</dbReference>
<dbReference type="FunFam" id="1.20.5.170:FF:000004">
    <property type="entry name" value="Keratin, type II cytoskeletal 5"/>
    <property type="match status" value="1"/>
</dbReference>
<dbReference type="FunFam" id="1.20.5.500:FF:000001">
    <property type="entry name" value="Type II keratin 23"/>
    <property type="match status" value="1"/>
</dbReference>
<dbReference type="Gene3D" id="1.20.5.170">
    <property type="match status" value="1"/>
</dbReference>
<dbReference type="Gene3D" id="1.20.5.500">
    <property type="entry name" value="Single helix bin"/>
    <property type="match status" value="1"/>
</dbReference>
<dbReference type="Gene3D" id="1.20.5.1160">
    <property type="entry name" value="Vasodilator-stimulated phosphoprotein"/>
    <property type="match status" value="1"/>
</dbReference>
<dbReference type="InterPro" id="IPR018039">
    <property type="entry name" value="IF_conserved"/>
</dbReference>
<dbReference type="InterPro" id="IPR039008">
    <property type="entry name" value="IF_rod_dom"/>
</dbReference>
<dbReference type="InterPro" id="IPR032444">
    <property type="entry name" value="Keratin_2_head"/>
</dbReference>
<dbReference type="InterPro" id="IPR003054">
    <property type="entry name" value="Keratin_II"/>
</dbReference>
<dbReference type="PANTHER" id="PTHR45616">
    <property type="entry name" value="GATA-TYPE DOMAIN-CONTAINING PROTEIN"/>
    <property type="match status" value="1"/>
</dbReference>
<dbReference type="PANTHER" id="PTHR45616:SF2">
    <property type="entry name" value="KERATIN, TYPE II CYTOSKELETAL 72"/>
    <property type="match status" value="1"/>
</dbReference>
<dbReference type="Pfam" id="PF00038">
    <property type="entry name" value="Filament"/>
    <property type="match status" value="1"/>
</dbReference>
<dbReference type="Pfam" id="PF16208">
    <property type="entry name" value="Keratin_2_head"/>
    <property type="match status" value="1"/>
</dbReference>
<dbReference type="PRINTS" id="PR01276">
    <property type="entry name" value="TYPE2KERATIN"/>
</dbReference>
<dbReference type="SMART" id="SM01391">
    <property type="entry name" value="Filament"/>
    <property type="match status" value="1"/>
</dbReference>
<dbReference type="SUPFAM" id="SSF64593">
    <property type="entry name" value="Intermediate filament protein, coiled coil region"/>
    <property type="match status" value="3"/>
</dbReference>
<dbReference type="PROSITE" id="PS00226">
    <property type="entry name" value="IF_ROD_1"/>
    <property type="match status" value="1"/>
</dbReference>
<dbReference type="PROSITE" id="PS51842">
    <property type="entry name" value="IF_ROD_2"/>
    <property type="match status" value="1"/>
</dbReference>
<comment type="function">
    <text evidence="10">Has a role in hair formation. Specific component of keratin intermediate filaments in the inner root sheath (IRS) of the hair follicle (Probable).</text>
</comment>
<comment type="subunit">
    <text>Heterotetramer of two type I and two type II keratins.</text>
</comment>
<comment type="interaction">
    <interactant intactId="EBI-1221280">
        <id>Q14CN4</id>
    </interactant>
    <interactant intactId="EBI-465781">
        <id>Q9UL45</id>
        <label>BLOC1S6</label>
    </interactant>
    <organismsDiffer>false</organismsDiffer>
    <experiments>3</experiments>
</comment>
<comment type="interaction">
    <interactant intactId="EBI-1221280">
        <id>Q14CN4</id>
    </interactant>
    <interactant intactId="EBI-1223876">
        <id>P13646</id>
        <label>KRT13</label>
    </interactant>
    <organismsDiffer>false</organismsDiffer>
    <experiments>3</experiments>
</comment>
<comment type="interaction">
    <interactant intactId="EBI-1221280">
        <id>Q14CN4</id>
    </interactant>
    <interactant intactId="EBI-702178">
        <id>P02533</id>
        <label>KRT14</label>
    </interactant>
    <organismsDiffer>false</organismsDiffer>
    <experiments>3</experiments>
</comment>
<comment type="interaction">
    <interactant intactId="EBI-1221280">
        <id>Q14CN4</id>
    </interactant>
    <interactant intactId="EBI-739566">
        <id>P19012</id>
        <label>KRT15</label>
    </interactant>
    <organismsDiffer>false</organismsDiffer>
    <experiments>3</experiments>
</comment>
<comment type="interaction">
    <interactant intactId="EBI-1221280">
        <id>Q14CN4</id>
    </interactant>
    <interactant intactId="EBI-356410">
        <id>P08779</id>
        <label>KRT16</label>
    </interactant>
    <organismsDiffer>false</organismsDiffer>
    <experiments>3</experiments>
</comment>
<comment type="interaction">
    <interactant intactId="EBI-1221280">
        <id>Q14CN4</id>
    </interactant>
    <interactant intactId="EBI-742756">
        <id>P08727</id>
        <label>KRT19</label>
    </interactant>
    <organismsDiffer>false</organismsDiffer>
    <experiments>3</experiments>
</comment>
<comment type="interaction">
    <interactant intactId="EBI-1221280">
        <id>Q14CN4</id>
    </interactant>
    <interactant intactId="EBI-742094">
        <id>P35900</id>
        <label>KRT20</label>
    </interactant>
    <organismsDiffer>false</organismsDiffer>
    <experiments>3</experiments>
</comment>
<comment type="interaction">
    <interactant intactId="EBI-1221280">
        <id>Q14CN4</id>
    </interactant>
    <interactant intactId="EBI-2952736">
        <id>Q2M2I5</id>
        <label>KRT24</label>
    </interactant>
    <organismsDiffer>false</organismsDiffer>
    <experiments>3</experiments>
</comment>
<comment type="interaction">
    <interactant intactId="EBI-1221280">
        <id>Q14CN4</id>
    </interactant>
    <interactant intactId="EBI-11980019">
        <id>Q7Z3Z0</id>
        <label>KRT25</label>
    </interactant>
    <organismsDiffer>false</organismsDiffer>
    <experiments>3</experiments>
</comment>
<comment type="interaction">
    <interactant intactId="EBI-1221280">
        <id>Q14CN4</id>
    </interactant>
    <interactant intactId="EBI-3044087">
        <id>Q7Z3Y8</id>
        <label>KRT27</label>
    </interactant>
    <organismsDiffer>false</organismsDiffer>
    <experiments>3</experiments>
</comment>
<comment type="interaction">
    <interactant intactId="EBI-1221280">
        <id>Q14CN4</id>
    </interactant>
    <interactant intactId="EBI-948001">
        <id>Q15323</id>
        <label>KRT31</label>
    </interactant>
    <organismsDiffer>false</organismsDiffer>
    <experiments>3</experiments>
</comment>
<comment type="interaction">
    <interactant intactId="EBI-1221280">
        <id>Q14CN4</id>
    </interactant>
    <interactant intactId="EBI-1044146">
        <id>Q14532</id>
        <label>KRT32</label>
    </interactant>
    <organismsDiffer>false</organismsDiffer>
    <experiments>3</experiments>
</comment>
<comment type="interaction">
    <interactant intactId="EBI-1221280">
        <id>Q14CN4</id>
    </interactant>
    <interactant intactId="EBI-1049638">
        <id>Q14525</id>
        <label>KRT33B</label>
    </interactant>
    <organismsDiffer>false</organismsDiffer>
    <experiments>3</experiments>
</comment>
<comment type="interaction">
    <interactant intactId="EBI-1221280">
        <id>Q14CN4</id>
    </interactant>
    <interactant intactId="EBI-1058674">
        <id>Q92764</id>
        <label>KRT35</label>
    </interactant>
    <organismsDiffer>false</organismsDiffer>
    <experiments>3</experiments>
</comment>
<comment type="interaction">
    <interactant intactId="EBI-1221280">
        <id>Q14CN4</id>
    </interactant>
    <interactant intactId="EBI-1047263">
        <id>O76015</id>
        <label>KRT38</label>
    </interactant>
    <organismsDiffer>false</organismsDiffer>
    <experiments>3</experiments>
</comment>
<comment type="interaction">
    <interactant intactId="EBI-1221280">
        <id>Q14CN4</id>
    </interactant>
    <interactant intactId="EBI-10171697">
        <id>Q6A162</id>
        <label>KRT40</label>
    </interactant>
    <organismsDiffer>false</organismsDiffer>
    <experiments>3</experiments>
</comment>
<comment type="alternative products">
    <event type="alternative splicing"/>
    <isoform>
        <id>Q14CN4-1</id>
        <name>1</name>
        <sequence type="displayed"/>
    </isoform>
    <isoform>
        <id>Q14CN4-2</id>
        <name>2</name>
        <sequence type="described" ref="VSP_030416"/>
    </isoform>
    <isoform>
        <id>Q14CN4-3</id>
        <name>3</name>
        <sequence type="described" ref="VSP_045280"/>
    </isoform>
</comment>
<comment type="tissue specificity">
    <text evidence="3 4 7">Highly expressed in hair follicles from scalp and eyebrow. Also expressed in palmoplantar epidermis. Not expressed in face skin despite the presence of fine hairs histologically. In hair, it is specifically present in the inner root sheath (IRS) of the hair follicle. Present in the IRS cuticle, but not in Henle or Huxley layers of the IRS. In the IRS cuticle, its presence is delayed up to the height of the apex of the dermal papilla (at protein level).</text>
</comment>
<comment type="miscellaneous">
    <text>There are two types of cytoskeletal and microfibrillar keratin, I (acidic) and II (neutral to basic) (40-55 and 56-70 kDa, respectively).</text>
</comment>
<comment type="similarity">
    <text evidence="1">Belongs to the intermediate filament family.</text>
</comment>
<comment type="caution">
    <text evidence="11">Was initially thought to be the ortholog of mouse KRT71.</text>
</comment>
<comment type="sequence caution" evidence="10">
    <conflict type="erroneous initiation">
        <sequence resource="EMBL-CDS" id="BAC04039"/>
    </conflict>
</comment>
<sequence length="511" mass="55877">MSRQLTHFPRGERLGFSGCSAVLSGGIGSSSASFRARVKGSASFGSKSLSCLGGSRSLALSAAARRGGGRLGGFVGTAFGSAGLGPKCPSVCPPGGIPQVTVNKSLLAPLNVEMDPEIQRVRAQEREQIKALNNKFASFIDKVRFLEQQNQVLETKWNLLQQLDLNNCRKNLEPIYEGYISNLQKQLEMLSGDGVRLDSELRNMQDLVEDYKKRYEVEINRRTAAENEFVVLKKDVDAAYMNKVELQAKVDSLTDEIKFFKCLYEGEITQIQSHISDTSIVLSMDNNRDLDLDSIIAEVRAQYEEIALKSKAEAETLYQTKIQELQVTAGQHGDDLKLTKAEISELNRLIQRIRSEIGNVKKQCADLETAIADAEQRGDCALKDARAKLDELEGALHQAKEELARMLREYQELVSLKLALDMEIATYRKLLESEECRMSGEYPNSVSISVISSTNAGAGGAGFSMGFGASSSYSYKTAAADVKTKGSCGSELKDPLAKTSGSSCATKKASR</sequence>
<keyword id="KW-0025">Alternative splicing</keyword>
<keyword id="KW-0175">Coiled coil</keyword>
<keyword id="KW-0403">Intermediate filament</keyword>
<keyword id="KW-0416">Keratin</keyword>
<keyword id="KW-1267">Proteomics identification</keyword>
<keyword id="KW-1185">Reference proteome</keyword>
<reference key="1">
    <citation type="journal article" date="2001" name="Br. J. Dermatol.">
        <title>Keratin K6irs is specific to the inner root sheath of hair follicles in mice and humans.</title>
        <authorList>
            <person name="Porter R.M."/>
            <person name="Corden L.D."/>
            <person name="Lunny D.P."/>
            <person name="Smith F.J.D."/>
            <person name="Lane E.B."/>
            <person name="McLean W.H.I."/>
        </authorList>
    </citation>
    <scope>NUCLEOTIDE SEQUENCE [GENOMIC DNA / MRNA] (ISOFORMS 1 AND 2)</scope>
    <scope>TISSUE SPECIFICITY</scope>
</reference>
<reference key="2">
    <citation type="journal article" date="2004" name="Nat. Genet.">
        <title>Complete sequencing and characterization of 21,243 full-length human cDNAs.</title>
        <authorList>
            <person name="Ota T."/>
            <person name="Suzuki Y."/>
            <person name="Nishikawa T."/>
            <person name="Otsuki T."/>
            <person name="Sugiyama T."/>
            <person name="Irie R."/>
            <person name="Wakamatsu A."/>
            <person name="Hayashi K."/>
            <person name="Sato H."/>
            <person name="Nagai K."/>
            <person name="Kimura K."/>
            <person name="Makita H."/>
            <person name="Sekine M."/>
            <person name="Obayashi M."/>
            <person name="Nishi T."/>
            <person name="Shibahara T."/>
            <person name="Tanaka T."/>
            <person name="Ishii S."/>
            <person name="Yamamoto J."/>
            <person name="Saito K."/>
            <person name="Kawai Y."/>
            <person name="Isono Y."/>
            <person name="Nakamura Y."/>
            <person name="Nagahari K."/>
            <person name="Murakami K."/>
            <person name="Yasuda T."/>
            <person name="Iwayanagi T."/>
            <person name="Wagatsuma M."/>
            <person name="Shiratori A."/>
            <person name="Sudo H."/>
            <person name="Hosoiri T."/>
            <person name="Kaku Y."/>
            <person name="Kodaira H."/>
            <person name="Kondo H."/>
            <person name="Sugawara M."/>
            <person name="Takahashi M."/>
            <person name="Kanda K."/>
            <person name="Yokoi T."/>
            <person name="Furuya T."/>
            <person name="Kikkawa E."/>
            <person name="Omura Y."/>
            <person name="Abe K."/>
            <person name="Kamihara K."/>
            <person name="Katsuta N."/>
            <person name="Sato K."/>
            <person name="Tanikawa M."/>
            <person name="Yamazaki M."/>
            <person name="Ninomiya K."/>
            <person name="Ishibashi T."/>
            <person name="Yamashita H."/>
            <person name="Murakawa K."/>
            <person name="Fujimori K."/>
            <person name="Tanai H."/>
            <person name="Kimata M."/>
            <person name="Watanabe M."/>
            <person name="Hiraoka S."/>
            <person name="Chiba Y."/>
            <person name="Ishida S."/>
            <person name="Ono Y."/>
            <person name="Takiguchi S."/>
            <person name="Watanabe S."/>
            <person name="Yosida M."/>
            <person name="Hotuta T."/>
            <person name="Kusano J."/>
            <person name="Kanehori K."/>
            <person name="Takahashi-Fujii A."/>
            <person name="Hara H."/>
            <person name="Tanase T.-O."/>
            <person name="Nomura Y."/>
            <person name="Togiya S."/>
            <person name="Komai F."/>
            <person name="Hara R."/>
            <person name="Takeuchi K."/>
            <person name="Arita M."/>
            <person name="Imose N."/>
            <person name="Musashino K."/>
            <person name="Yuuki H."/>
            <person name="Oshima A."/>
            <person name="Sasaki N."/>
            <person name="Aotsuka S."/>
            <person name="Yoshikawa Y."/>
            <person name="Matsunawa H."/>
            <person name="Ichihara T."/>
            <person name="Shiohata N."/>
            <person name="Sano S."/>
            <person name="Moriya S."/>
            <person name="Momiyama H."/>
            <person name="Satoh N."/>
            <person name="Takami S."/>
            <person name="Terashima Y."/>
            <person name="Suzuki O."/>
            <person name="Nakagawa S."/>
            <person name="Senoh A."/>
            <person name="Mizoguchi H."/>
            <person name="Goto Y."/>
            <person name="Shimizu F."/>
            <person name="Wakebe H."/>
            <person name="Hishigaki H."/>
            <person name="Watanabe T."/>
            <person name="Sugiyama A."/>
            <person name="Takemoto M."/>
            <person name="Kawakami B."/>
            <person name="Yamazaki M."/>
            <person name="Watanabe K."/>
            <person name="Kumagai A."/>
            <person name="Itakura S."/>
            <person name="Fukuzumi Y."/>
            <person name="Fujimori Y."/>
            <person name="Komiyama M."/>
            <person name="Tashiro H."/>
            <person name="Tanigami A."/>
            <person name="Fujiwara T."/>
            <person name="Ono T."/>
            <person name="Yamada K."/>
            <person name="Fujii Y."/>
            <person name="Ozaki K."/>
            <person name="Hirao M."/>
            <person name="Ohmori Y."/>
            <person name="Kawabata A."/>
            <person name="Hikiji T."/>
            <person name="Kobatake N."/>
            <person name="Inagaki H."/>
            <person name="Ikema Y."/>
            <person name="Okamoto S."/>
            <person name="Okitani R."/>
            <person name="Kawakami T."/>
            <person name="Noguchi S."/>
            <person name="Itoh T."/>
            <person name="Shigeta K."/>
            <person name="Senba T."/>
            <person name="Matsumura K."/>
            <person name="Nakajima Y."/>
            <person name="Mizuno T."/>
            <person name="Morinaga M."/>
            <person name="Sasaki M."/>
            <person name="Togashi T."/>
            <person name="Oyama M."/>
            <person name="Hata H."/>
            <person name="Watanabe M."/>
            <person name="Komatsu T."/>
            <person name="Mizushima-Sugano J."/>
            <person name="Satoh T."/>
            <person name="Shirai Y."/>
            <person name="Takahashi Y."/>
            <person name="Nakagawa K."/>
            <person name="Okumura K."/>
            <person name="Nagase T."/>
            <person name="Nomura N."/>
            <person name="Kikuchi H."/>
            <person name="Masuho Y."/>
            <person name="Yamashita R."/>
            <person name="Nakai K."/>
            <person name="Yada T."/>
            <person name="Nakamura Y."/>
            <person name="Ohara O."/>
            <person name="Isogai T."/>
            <person name="Sugano S."/>
        </authorList>
    </citation>
    <scope>NUCLEOTIDE SEQUENCE [LARGE SCALE MRNA] (ISOFORM 3)</scope>
    <scope>NUCLEOTIDE SEQUENCE [LARGE SCALE MRNA] OF 5-511</scope>
    <scope>VARIANTS ASP-171; CYS-264 AND LEU-428</scope>
    <source>
        <tissue>Cerebellum</tissue>
        <tissue>Testis</tissue>
    </source>
</reference>
<reference key="3">
    <citation type="journal article" date="2006" name="Nature">
        <title>The finished DNA sequence of human chromosome 12.</title>
        <authorList>
            <person name="Scherer S.E."/>
            <person name="Muzny D.M."/>
            <person name="Buhay C.J."/>
            <person name="Chen R."/>
            <person name="Cree A."/>
            <person name="Ding Y."/>
            <person name="Dugan-Rocha S."/>
            <person name="Gill R."/>
            <person name="Gunaratne P."/>
            <person name="Harris R.A."/>
            <person name="Hawes A.C."/>
            <person name="Hernandez J."/>
            <person name="Hodgson A.V."/>
            <person name="Hume J."/>
            <person name="Jackson A."/>
            <person name="Khan Z.M."/>
            <person name="Kovar-Smith C."/>
            <person name="Lewis L.R."/>
            <person name="Lozado R.J."/>
            <person name="Metzker M.L."/>
            <person name="Milosavljevic A."/>
            <person name="Miner G.R."/>
            <person name="Montgomery K.T."/>
            <person name="Morgan M.B."/>
            <person name="Nazareth L.V."/>
            <person name="Scott G."/>
            <person name="Sodergren E."/>
            <person name="Song X.-Z."/>
            <person name="Steffen D."/>
            <person name="Lovering R.C."/>
            <person name="Wheeler D.A."/>
            <person name="Worley K.C."/>
            <person name="Yuan Y."/>
            <person name="Zhang Z."/>
            <person name="Adams C.Q."/>
            <person name="Ansari-Lari M.A."/>
            <person name="Ayele M."/>
            <person name="Brown M.J."/>
            <person name="Chen G."/>
            <person name="Chen Z."/>
            <person name="Clerc-Blankenburg K.P."/>
            <person name="Davis C."/>
            <person name="Delgado O."/>
            <person name="Dinh H.H."/>
            <person name="Draper H."/>
            <person name="Gonzalez-Garay M.L."/>
            <person name="Havlak P."/>
            <person name="Jackson L.R."/>
            <person name="Jacob L.S."/>
            <person name="Kelly S.H."/>
            <person name="Li L."/>
            <person name="Li Z."/>
            <person name="Liu J."/>
            <person name="Liu W."/>
            <person name="Lu J."/>
            <person name="Maheshwari M."/>
            <person name="Nguyen B.-V."/>
            <person name="Okwuonu G.O."/>
            <person name="Pasternak S."/>
            <person name="Perez L.M."/>
            <person name="Plopper F.J.H."/>
            <person name="Santibanez J."/>
            <person name="Shen H."/>
            <person name="Tabor P.E."/>
            <person name="Verduzco D."/>
            <person name="Waldron L."/>
            <person name="Wang Q."/>
            <person name="Williams G.A."/>
            <person name="Zhang J."/>
            <person name="Zhou J."/>
            <person name="Allen C.C."/>
            <person name="Amin A.G."/>
            <person name="Anyalebechi V."/>
            <person name="Bailey M."/>
            <person name="Barbaria J.A."/>
            <person name="Bimage K.E."/>
            <person name="Bryant N.P."/>
            <person name="Burch P.E."/>
            <person name="Burkett C.E."/>
            <person name="Burrell K.L."/>
            <person name="Calderon E."/>
            <person name="Cardenas V."/>
            <person name="Carter K."/>
            <person name="Casias K."/>
            <person name="Cavazos I."/>
            <person name="Cavazos S.R."/>
            <person name="Ceasar H."/>
            <person name="Chacko J."/>
            <person name="Chan S.N."/>
            <person name="Chavez D."/>
            <person name="Christopoulos C."/>
            <person name="Chu J."/>
            <person name="Cockrell R."/>
            <person name="Cox C.D."/>
            <person name="Dang M."/>
            <person name="Dathorne S.R."/>
            <person name="David R."/>
            <person name="Davis C.M."/>
            <person name="Davy-Carroll L."/>
            <person name="Deshazo D.R."/>
            <person name="Donlin J.E."/>
            <person name="D'Souza L."/>
            <person name="Eaves K.A."/>
            <person name="Egan A."/>
            <person name="Emery-Cohen A.J."/>
            <person name="Escotto M."/>
            <person name="Flagg N."/>
            <person name="Forbes L.D."/>
            <person name="Gabisi A.M."/>
            <person name="Garza M."/>
            <person name="Hamilton C."/>
            <person name="Henderson N."/>
            <person name="Hernandez O."/>
            <person name="Hines S."/>
            <person name="Hogues M.E."/>
            <person name="Huang M."/>
            <person name="Idlebird D.G."/>
            <person name="Johnson R."/>
            <person name="Jolivet A."/>
            <person name="Jones S."/>
            <person name="Kagan R."/>
            <person name="King L.M."/>
            <person name="Leal B."/>
            <person name="Lebow H."/>
            <person name="Lee S."/>
            <person name="LeVan J.M."/>
            <person name="Lewis L.C."/>
            <person name="London P."/>
            <person name="Lorensuhewa L.M."/>
            <person name="Loulseged H."/>
            <person name="Lovett D.A."/>
            <person name="Lucier A."/>
            <person name="Lucier R.L."/>
            <person name="Ma J."/>
            <person name="Madu R.C."/>
            <person name="Mapua P."/>
            <person name="Martindale A.D."/>
            <person name="Martinez E."/>
            <person name="Massey E."/>
            <person name="Mawhiney S."/>
            <person name="Meador M.G."/>
            <person name="Mendez S."/>
            <person name="Mercado C."/>
            <person name="Mercado I.C."/>
            <person name="Merritt C.E."/>
            <person name="Miner Z.L."/>
            <person name="Minja E."/>
            <person name="Mitchell T."/>
            <person name="Mohabbat F."/>
            <person name="Mohabbat K."/>
            <person name="Montgomery B."/>
            <person name="Moore N."/>
            <person name="Morris S."/>
            <person name="Munidasa M."/>
            <person name="Ngo R.N."/>
            <person name="Nguyen N.B."/>
            <person name="Nickerson E."/>
            <person name="Nwaokelemeh O.O."/>
            <person name="Nwokenkwo S."/>
            <person name="Obregon M."/>
            <person name="Oguh M."/>
            <person name="Oragunye N."/>
            <person name="Oviedo R.J."/>
            <person name="Parish B.J."/>
            <person name="Parker D.N."/>
            <person name="Parrish J."/>
            <person name="Parks K.L."/>
            <person name="Paul H.A."/>
            <person name="Payton B.A."/>
            <person name="Perez A."/>
            <person name="Perrin W."/>
            <person name="Pickens A."/>
            <person name="Primus E.L."/>
            <person name="Pu L.-L."/>
            <person name="Puazo M."/>
            <person name="Quiles M.M."/>
            <person name="Quiroz J.B."/>
            <person name="Rabata D."/>
            <person name="Reeves K."/>
            <person name="Ruiz S.J."/>
            <person name="Shao H."/>
            <person name="Sisson I."/>
            <person name="Sonaike T."/>
            <person name="Sorelle R.P."/>
            <person name="Sutton A.E."/>
            <person name="Svatek A.F."/>
            <person name="Svetz L.A."/>
            <person name="Tamerisa K.S."/>
            <person name="Taylor T.R."/>
            <person name="Teague B."/>
            <person name="Thomas N."/>
            <person name="Thorn R.D."/>
            <person name="Trejos Z.Y."/>
            <person name="Trevino B.K."/>
            <person name="Ukegbu O.N."/>
            <person name="Urban J.B."/>
            <person name="Vasquez L.I."/>
            <person name="Vera V.A."/>
            <person name="Villasana D.M."/>
            <person name="Wang L."/>
            <person name="Ward-Moore S."/>
            <person name="Warren J.T."/>
            <person name="Wei X."/>
            <person name="White F."/>
            <person name="Williamson A.L."/>
            <person name="Wleczyk R."/>
            <person name="Wooden H.S."/>
            <person name="Wooden S.H."/>
            <person name="Yen J."/>
            <person name="Yoon L."/>
            <person name="Yoon V."/>
            <person name="Zorrilla S.E."/>
            <person name="Nelson D."/>
            <person name="Kucherlapati R."/>
            <person name="Weinstock G."/>
            <person name="Gibbs R.A."/>
        </authorList>
    </citation>
    <scope>NUCLEOTIDE SEQUENCE [LARGE SCALE GENOMIC DNA]</scope>
</reference>
<reference key="4">
    <citation type="journal article" date="2004" name="Genome Res.">
        <title>The status, quality, and expansion of the NIH full-length cDNA project: the Mammalian Gene Collection (MGC).</title>
        <authorList>
            <consortium name="The MGC Project Team"/>
        </authorList>
    </citation>
    <scope>NUCLEOTIDE SEQUENCE [LARGE SCALE MRNA] (ISOFORM 1)</scope>
    <scope>VARIANT GLU-366</scope>
    <source>
        <tissue>Brain</tissue>
    </source>
</reference>
<reference key="5">
    <citation type="journal article" date="2003" name="J. Invest. Dermatol.">
        <title>K6irs1, K6irs2, K6irs3, and K6irs4 represent the inner-root-sheath-specific type II epithelial keratins of the human hair follicle.</title>
        <authorList>
            <person name="Langbein L."/>
            <person name="Rogers M.A."/>
            <person name="Praetzel S."/>
            <person name="Winter H."/>
            <person name="Schweizer J."/>
        </authorList>
    </citation>
    <scope>TISSUE SPECIFICITY</scope>
</reference>
<reference key="6">
    <citation type="journal article" date="2006" name="J. Invest. Dermatol.">
        <title>K25 (K25irs1), K26 (K25irs2), K27 (K25irs3), and K28 (K25irs4) represent the type I inner root sheath keratins of the human hair follicle.</title>
        <authorList>
            <person name="Langbein L."/>
            <person name="Rogers M.A."/>
            <person name="Praetzel-Wunder S."/>
            <person name="Helmke B."/>
            <person name="Schirmacher P."/>
            <person name="Schweizer J."/>
        </authorList>
    </citation>
    <scope>TISSUE SPECIFICITY</scope>
</reference>
<name>K2C72_HUMAN</name>
<proteinExistence type="evidence at protein level"/>
<organism>
    <name type="scientific">Homo sapiens</name>
    <name type="common">Human</name>
    <dbReference type="NCBI Taxonomy" id="9606"/>
    <lineage>
        <taxon>Eukaryota</taxon>
        <taxon>Metazoa</taxon>
        <taxon>Chordata</taxon>
        <taxon>Craniata</taxon>
        <taxon>Vertebrata</taxon>
        <taxon>Euteleostomi</taxon>
        <taxon>Mammalia</taxon>
        <taxon>Eutheria</taxon>
        <taxon>Euarchontoglires</taxon>
        <taxon>Primates</taxon>
        <taxon>Haplorrhini</taxon>
        <taxon>Catarrhini</taxon>
        <taxon>Hominidae</taxon>
        <taxon>Homo</taxon>
    </lineage>
</organism>
<gene>
    <name type="primary">KRT72</name>
    <name type="synonym">K6IRS2</name>
    <name type="synonym">KB35</name>
    <name type="synonym">KRT6</name>
    <name type="synonym">KRT6IRS2</name>
</gene>
<accession>Q14CN4</accession>
<accession>B4DEI8</accession>
<accession>H9KV51</accession>
<accession>Q8NA87</accession>
<accession>Q8WWY9</accession>
<accession>Q8WWZ0</accession>
<feature type="chain" id="PRO_0000314877" description="Keratin, type II cytoskeletal 72">
    <location>
        <begin position="1"/>
        <end position="511"/>
    </location>
</feature>
<feature type="domain" description="IF rod" evidence="1">
    <location>
        <begin position="125"/>
        <end position="438"/>
    </location>
</feature>
<feature type="region of interest" description="Head">
    <location>
        <begin position="1"/>
        <end position="124"/>
    </location>
</feature>
<feature type="region of interest" description="Coil 1A">
    <location>
        <begin position="125"/>
        <end position="160"/>
    </location>
</feature>
<feature type="region of interest" description="Linker 1">
    <location>
        <begin position="161"/>
        <end position="179"/>
    </location>
</feature>
<feature type="region of interest" description="Coil 1B">
    <location>
        <begin position="180"/>
        <end position="271"/>
    </location>
</feature>
<feature type="region of interest" description="Linker 12">
    <location>
        <begin position="272"/>
        <end position="295"/>
    </location>
</feature>
<feature type="region of interest" description="Coil 2">
    <location>
        <begin position="296"/>
        <end position="434"/>
    </location>
</feature>
<feature type="region of interest" description="Tail">
    <location>
        <begin position="435"/>
        <end position="511"/>
    </location>
</feature>
<feature type="region of interest" description="Disordered" evidence="2">
    <location>
        <begin position="486"/>
        <end position="511"/>
    </location>
</feature>
<feature type="site" description="Stutter">
    <location>
        <position position="376"/>
    </location>
</feature>
<feature type="splice variant" id="VSP_045280" description="In isoform 3." evidence="9">
    <location>
        <begin position="322"/>
        <end position="363"/>
    </location>
</feature>
<feature type="splice variant" id="VSP_030416" description="In isoform 2." evidence="8">
    <location>
        <position position="363"/>
    </location>
</feature>
<feature type="sequence variant" id="VAR_038087" description="In dbSNP:rs11170187." evidence="5">
    <original>N</original>
    <variation>D</variation>
    <location>
        <position position="171"/>
    </location>
</feature>
<feature type="sequence variant" id="VAR_038088" description="In dbSNP:rs12833456." evidence="5">
    <original>Y</original>
    <variation>C</variation>
    <location>
        <position position="264"/>
    </location>
</feature>
<feature type="sequence variant" id="VAR_061298" description="In dbSNP:rs34769047.">
    <original>Q</original>
    <variation>E</variation>
    <location>
        <position position="326"/>
    </location>
</feature>
<feature type="sequence variant" id="VAR_038089" description="In dbSNP:rs7310138." evidence="6">
    <original>D</original>
    <variation>E</variation>
    <location>
        <position position="366"/>
    </location>
</feature>
<feature type="sequence variant" id="VAR_038090" description="In dbSNP:rs11170183." evidence="5">
    <original>R</original>
    <variation>L</variation>
    <location>
        <position position="428"/>
    </location>
</feature>
<evidence type="ECO:0000255" key="1">
    <source>
        <dbReference type="PROSITE-ProRule" id="PRU01188"/>
    </source>
</evidence>
<evidence type="ECO:0000256" key="2">
    <source>
        <dbReference type="SAM" id="MobiDB-lite"/>
    </source>
</evidence>
<evidence type="ECO:0000269" key="3">
    <source>
    </source>
</evidence>
<evidence type="ECO:0000269" key="4">
    <source>
    </source>
</evidence>
<evidence type="ECO:0000269" key="5">
    <source>
    </source>
</evidence>
<evidence type="ECO:0000269" key="6">
    <source>
    </source>
</evidence>
<evidence type="ECO:0000269" key="7">
    <source>
    </source>
</evidence>
<evidence type="ECO:0000303" key="8">
    <source>
    </source>
</evidence>
<evidence type="ECO:0000303" key="9">
    <source>
    </source>
</evidence>
<evidence type="ECO:0000305" key="10"/>
<evidence type="ECO:0000305" key="11">
    <source>
    </source>
</evidence>
<protein>
    <recommendedName>
        <fullName>Keratin, type II cytoskeletal 72</fullName>
    </recommendedName>
    <alternativeName>
        <fullName>Cytokeratin-72</fullName>
        <shortName>CK-72</shortName>
    </alternativeName>
    <alternativeName>
        <fullName>Keratin-72</fullName>
        <shortName>K72</shortName>
    </alternativeName>
    <alternativeName>
        <fullName>Type II inner root sheath-specific keratin-K6irs2</fullName>
    </alternativeName>
    <alternativeName>
        <fullName>Type-II keratin Kb35</fullName>
    </alternativeName>
</protein>